<gene>
    <name evidence="1" type="primary">atpC</name>
    <name type="ordered locus">BAV3213</name>
</gene>
<dbReference type="EMBL" id="AM167904">
    <property type="protein sequence ID" value="CAJ50823.1"/>
    <property type="molecule type" value="Genomic_DNA"/>
</dbReference>
<dbReference type="RefSeq" id="WP_012418851.1">
    <property type="nucleotide sequence ID" value="NC_010645.1"/>
</dbReference>
<dbReference type="SMR" id="Q2KU37"/>
<dbReference type="STRING" id="360910.BAV3213"/>
<dbReference type="GeneID" id="92933529"/>
<dbReference type="KEGG" id="bav:BAV3213"/>
<dbReference type="eggNOG" id="COG0355">
    <property type="taxonomic scope" value="Bacteria"/>
</dbReference>
<dbReference type="HOGENOM" id="CLU_084338_2_0_4"/>
<dbReference type="OrthoDB" id="9791445at2"/>
<dbReference type="Proteomes" id="UP000001977">
    <property type="component" value="Chromosome"/>
</dbReference>
<dbReference type="GO" id="GO:0005886">
    <property type="term" value="C:plasma membrane"/>
    <property type="evidence" value="ECO:0007669"/>
    <property type="project" value="UniProtKB-SubCell"/>
</dbReference>
<dbReference type="GO" id="GO:0045259">
    <property type="term" value="C:proton-transporting ATP synthase complex"/>
    <property type="evidence" value="ECO:0007669"/>
    <property type="project" value="UniProtKB-KW"/>
</dbReference>
<dbReference type="GO" id="GO:0005524">
    <property type="term" value="F:ATP binding"/>
    <property type="evidence" value="ECO:0007669"/>
    <property type="project" value="UniProtKB-UniRule"/>
</dbReference>
<dbReference type="GO" id="GO:0046933">
    <property type="term" value="F:proton-transporting ATP synthase activity, rotational mechanism"/>
    <property type="evidence" value="ECO:0007669"/>
    <property type="project" value="UniProtKB-UniRule"/>
</dbReference>
<dbReference type="CDD" id="cd12152">
    <property type="entry name" value="F1-ATPase_delta"/>
    <property type="match status" value="1"/>
</dbReference>
<dbReference type="FunFam" id="2.60.15.10:FF:000001">
    <property type="entry name" value="ATP synthase epsilon chain"/>
    <property type="match status" value="1"/>
</dbReference>
<dbReference type="Gene3D" id="2.60.15.10">
    <property type="entry name" value="F0F1 ATP synthase delta/epsilon subunit, N-terminal"/>
    <property type="match status" value="1"/>
</dbReference>
<dbReference type="HAMAP" id="MF_00530">
    <property type="entry name" value="ATP_synth_epsil_bac"/>
    <property type="match status" value="1"/>
</dbReference>
<dbReference type="InterPro" id="IPR036794">
    <property type="entry name" value="ATP_F1_dsu/esu_C_sf"/>
</dbReference>
<dbReference type="InterPro" id="IPR001469">
    <property type="entry name" value="ATP_synth_F1_dsu/esu"/>
</dbReference>
<dbReference type="InterPro" id="IPR020546">
    <property type="entry name" value="ATP_synth_F1_dsu/esu_N"/>
</dbReference>
<dbReference type="InterPro" id="IPR036771">
    <property type="entry name" value="ATPsynth_dsu/esu_N"/>
</dbReference>
<dbReference type="NCBIfam" id="TIGR01216">
    <property type="entry name" value="ATP_synt_epsi"/>
    <property type="match status" value="1"/>
</dbReference>
<dbReference type="NCBIfam" id="NF001847">
    <property type="entry name" value="PRK00571.1-4"/>
    <property type="match status" value="1"/>
</dbReference>
<dbReference type="PANTHER" id="PTHR13822">
    <property type="entry name" value="ATP SYNTHASE DELTA/EPSILON CHAIN"/>
    <property type="match status" value="1"/>
</dbReference>
<dbReference type="PANTHER" id="PTHR13822:SF10">
    <property type="entry name" value="ATP SYNTHASE EPSILON CHAIN, CHLOROPLASTIC"/>
    <property type="match status" value="1"/>
</dbReference>
<dbReference type="Pfam" id="PF02823">
    <property type="entry name" value="ATP-synt_DE_N"/>
    <property type="match status" value="1"/>
</dbReference>
<dbReference type="SUPFAM" id="SSF46604">
    <property type="entry name" value="Epsilon subunit of F1F0-ATP synthase C-terminal domain"/>
    <property type="match status" value="1"/>
</dbReference>
<dbReference type="SUPFAM" id="SSF51344">
    <property type="entry name" value="Epsilon subunit of F1F0-ATP synthase N-terminal domain"/>
    <property type="match status" value="1"/>
</dbReference>
<evidence type="ECO:0000255" key="1">
    <source>
        <dbReference type="HAMAP-Rule" id="MF_00530"/>
    </source>
</evidence>
<keyword id="KW-0066">ATP synthesis</keyword>
<keyword id="KW-0997">Cell inner membrane</keyword>
<keyword id="KW-1003">Cell membrane</keyword>
<keyword id="KW-0139">CF(1)</keyword>
<keyword id="KW-0375">Hydrogen ion transport</keyword>
<keyword id="KW-0406">Ion transport</keyword>
<keyword id="KW-0472">Membrane</keyword>
<keyword id="KW-1185">Reference proteome</keyword>
<keyword id="KW-0813">Transport</keyword>
<organism>
    <name type="scientific">Bordetella avium (strain 197N)</name>
    <dbReference type="NCBI Taxonomy" id="360910"/>
    <lineage>
        <taxon>Bacteria</taxon>
        <taxon>Pseudomonadati</taxon>
        <taxon>Pseudomonadota</taxon>
        <taxon>Betaproteobacteria</taxon>
        <taxon>Burkholderiales</taxon>
        <taxon>Alcaligenaceae</taxon>
        <taxon>Bordetella</taxon>
    </lineage>
</organism>
<reference key="1">
    <citation type="journal article" date="2006" name="J. Bacteriol.">
        <title>Comparison of the genome sequence of the poultry pathogen Bordetella avium with those of B. bronchiseptica, B. pertussis, and B. parapertussis reveals extensive diversity in surface structures associated with host interaction.</title>
        <authorList>
            <person name="Sebaihia M."/>
            <person name="Preston A."/>
            <person name="Maskell D.J."/>
            <person name="Kuzmiak H."/>
            <person name="Connell T.D."/>
            <person name="King N.D."/>
            <person name="Orndorff P.E."/>
            <person name="Miyamoto D.M."/>
            <person name="Thomson N.R."/>
            <person name="Harris D."/>
            <person name="Goble A."/>
            <person name="Lord A."/>
            <person name="Murphy L."/>
            <person name="Quail M.A."/>
            <person name="Rutter S."/>
            <person name="Squares R."/>
            <person name="Squares S."/>
            <person name="Woodward J."/>
            <person name="Parkhill J."/>
            <person name="Temple L.M."/>
        </authorList>
    </citation>
    <scope>NUCLEOTIDE SEQUENCE [LARGE SCALE GENOMIC DNA]</scope>
    <source>
        <strain>197N</strain>
    </source>
</reference>
<name>ATPE_BORA1</name>
<sequence>MATLHVDVVSAEEAIFSGEAKFVVLPGESGELGILPGHTPLISRIRPGTVKIVRADEGEENIFVAGGILEVQPGSVTVLSDTAIRAADLDEARALAAREKAEEALRNAKDREDIAAVEAELAMLAAQALAARRLRPGRGSH</sequence>
<accession>Q2KU37</accession>
<comment type="function">
    <text evidence="1">Produces ATP from ADP in the presence of a proton gradient across the membrane.</text>
</comment>
<comment type="subunit">
    <text>F-type ATPases have 2 components, CF(1) - the catalytic core - and CF(0) - the membrane proton channel. CF(1) has five subunits: alpha(3), beta(3), gamma(1), delta(1), epsilon(1). CF(0) has three main subunits: a, b and c.</text>
</comment>
<comment type="subcellular location">
    <subcellularLocation>
        <location evidence="1">Cell inner membrane</location>
        <topology evidence="1">Peripheral membrane protein</topology>
    </subcellularLocation>
</comment>
<comment type="similarity">
    <text evidence="1">Belongs to the ATPase epsilon chain family.</text>
</comment>
<proteinExistence type="inferred from homology"/>
<feature type="chain" id="PRO_0000265788" description="ATP synthase epsilon chain">
    <location>
        <begin position="1"/>
        <end position="141"/>
    </location>
</feature>
<protein>
    <recommendedName>
        <fullName evidence="1">ATP synthase epsilon chain</fullName>
    </recommendedName>
    <alternativeName>
        <fullName evidence="1">ATP synthase F1 sector epsilon subunit</fullName>
    </alternativeName>
    <alternativeName>
        <fullName evidence="1">F-ATPase epsilon subunit</fullName>
    </alternativeName>
</protein>